<protein>
    <recommendedName>
        <fullName>Conserved oligomeric Golgi complex subunit 6</fullName>
        <shortName>COG complex subunit 6</shortName>
    </recommendedName>
    <alternativeName>
        <fullName>Component of oligomeric Golgi complex 6</fullName>
    </alternativeName>
</protein>
<organism>
    <name type="scientific">Aspergillus terreus (strain NIH 2624 / FGSC A1156)</name>
    <dbReference type="NCBI Taxonomy" id="341663"/>
    <lineage>
        <taxon>Eukaryota</taxon>
        <taxon>Fungi</taxon>
        <taxon>Dikarya</taxon>
        <taxon>Ascomycota</taxon>
        <taxon>Pezizomycotina</taxon>
        <taxon>Eurotiomycetes</taxon>
        <taxon>Eurotiomycetidae</taxon>
        <taxon>Eurotiales</taxon>
        <taxon>Aspergillaceae</taxon>
        <taxon>Aspergillus</taxon>
        <taxon>Aspergillus subgen. Circumdati</taxon>
    </lineage>
</organism>
<evidence type="ECO:0000250" key="1"/>
<evidence type="ECO:0000256" key="2">
    <source>
        <dbReference type="SAM" id="MobiDB-lite"/>
    </source>
</evidence>
<evidence type="ECO:0000305" key="3"/>
<reference key="1">
    <citation type="submission" date="2005-09" db="EMBL/GenBank/DDBJ databases">
        <title>Annotation of the Aspergillus terreus NIH2624 genome.</title>
        <authorList>
            <person name="Birren B.W."/>
            <person name="Lander E.S."/>
            <person name="Galagan J.E."/>
            <person name="Nusbaum C."/>
            <person name="Devon K."/>
            <person name="Henn M."/>
            <person name="Ma L.-J."/>
            <person name="Jaffe D.B."/>
            <person name="Butler J."/>
            <person name="Alvarez P."/>
            <person name="Gnerre S."/>
            <person name="Grabherr M."/>
            <person name="Kleber M."/>
            <person name="Mauceli E.W."/>
            <person name="Brockman W."/>
            <person name="Rounsley S."/>
            <person name="Young S.K."/>
            <person name="LaButti K."/>
            <person name="Pushparaj V."/>
            <person name="DeCaprio D."/>
            <person name="Crawford M."/>
            <person name="Koehrsen M."/>
            <person name="Engels R."/>
            <person name="Montgomery P."/>
            <person name="Pearson M."/>
            <person name="Howarth C."/>
            <person name="Larson L."/>
            <person name="Luoma S."/>
            <person name="White J."/>
            <person name="Alvarado L."/>
            <person name="Kodira C.D."/>
            <person name="Zeng Q."/>
            <person name="Oleary S."/>
            <person name="Yandava C."/>
            <person name="Denning D.W."/>
            <person name="Nierman W.C."/>
            <person name="Milne T."/>
            <person name="Madden K."/>
        </authorList>
    </citation>
    <scope>NUCLEOTIDE SEQUENCE [LARGE SCALE GENOMIC DNA]</scope>
    <source>
        <strain>NIH 2624 / FGSC A1156</strain>
    </source>
</reference>
<sequence>MASYFPPGAASSHVSTRSSSPASSPLSPPAQQRSNALSNRLTSVLSASYADSDIRDALETLSLRGIHNTAEVRRQLRLDVQKEVVDSNAEIVRDFGKVAEQLKRIGTVISSLNQTCEEMKKHIVLAKQDTTPVLEEAASLMNQKREAETKQQLLDAFTKHFIVSEEDLLILTSAEEPIDERFFDLLSRVKQVHRDCEVLLGGENQRLGLELMEKSSRNLNSAYQKLYKWIQKEFRSLNLEDPRISSSIRRALRVLAERPSLFHSCLDFFAEARDYVLSDAFHYALTDAVTGAGGDNVKPIEFSAHDPLRYIGDMLAWVHSTTVSEREALESLFVADGEELAKGIQAGLNSEPWSRLDEDETVSFDGQKALSDLVNRDLTGVSRSLRQRVELVIQGHDDPVTCYKVANLLSFYRGTFSKLLGPRSNLADLLETLEKFTLRHFETLMRNQVNTLSADHAALIPSDDLSAPEFLQDALDVLTALMKTHEASFGADVSTDDGDNDSVNRFAPVLRAALDPFLELAKSTADELPNPTARAIYLTNIHLTTRSTIAAYPFASATHLTPLSTALSSLRVDLLAIQHRYLLDASGLQVLLAALEPFSPSSTNGPSDTANDGQQQKQPQPDIADIANLPAFQPDALVATSQQLDDFLPSALMDATDNLKRVQNASFAKSVTEEAVEAFCRDFEFVEGMIIGADEARAKVDVTRDRAVEDDSASDSDKDKDEDGDEDEDAEKGLGLRRLFPRTTGEIRVLLS</sequence>
<feature type="chain" id="PRO_0000339316" description="Conserved oligomeric Golgi complex subunit 6">
    <location>
        <begin position="1"/>
        <end position="752"/>
    </location>
</feature>
<feature type="region of interest" description="Disordered" evidence="2">
    <location>
        <begin position="1"/>
        <end position="36"/>
    </location>
</feature>
<feature type="region of interest" description="Disordered" evidence="2">
    <location>
        <begin position="601"/>
        <end position="620"/>
    </location>
</feature>
<feature type="region of interest" description="Disordered" evidence="2">
    <location>
        <begin position="702"/>
        <end position="736"/>
    </location>
</feature>
<feature type="compositionally biased region" description="Low complexity" evidence="2">
    <location>
        <begin position="9"/>
        <end position="25"/>
    </location>
</feature>
<feature type="compositionally biased region" description="Polar residues" evidence="2">
    <location>
        <begin position="601"/>
        <end position="619"/>
    </location>
</feature>
<feature type="compositionally biased region" description="Basic and acidic residues" evidence="2">
    <location>
        <begin position="702"/>
        <end position="721"/>
    </location>
</feature>
<gene>
    <name type="primary">cog6</name>
    <name type="ORF">ATEG_03271</name>
</gene>
<proteinExistence type="inferred from homology"/>
<comment type="function">
    <text evidence="1">Acts as a component of the peripheral membrane COG complex that is involved in intra-Golgi protein trafficking. COG is located at the cis-Golgi, and regulates tethering of retrograde intra-Golgi vesicles and possibly a number of other membrane trafficking events (By similarity).</text>
</comment>
<comment type="subcellular location">
    <subcellularLocation>
        <location evidence="1">Golgi apparatus membrane</location>
        <topology evidence="1">Peripheral membrane protein</topology>
    </subcellularLocation>
</comment>
<comment type="similarity">
    <text evidence="3">Belongs to the COG6 family.</text>
</comment>
<name>COG6_ASPTN</name>
<keyword id="KW-0333">Golgi apparatus</keyword>
<keyword id="KW-0472">Membrane</keyword>
<keyword id="KW-0653">Protein transport</keyword>
<keyword id="KW-1185">Reference proteome</keyword>
<keyword id="KW-0813">Transport</keyword>
<dbReference type="EMBL" id="CH476597">
    <property type="protein sequence ID" value="EAU36545.1"/>
    <property type="molecule type" value="Genomic_DNA"/>
</dbReference>
<dbReference type="RefSeq" id="XP_001212449.1">
    <property type="nucleotide sequence ID" value="XM_001212449.1"/>
</dbReference>
<dbReference type="SMR" id="Q0CSR3"/>
<dbReference type="STRING" id="341663.Q0CSR3"/>
<dbReference type="EnsemblFungi" id="EAU36545">
    <property type="protein sequence ID" value="EAU36545"/>
    <property type="gene ID" value="ATEG_03271"/>
</dbReference>
<dbReference type="GeneID" id="4317326"/>
<dbReference type="VEuPathDB" id="FungiDB:ATEG_03271"/>
<dbReference type="eggNOG" id="KOG3758">
    <property type="taxonomic scope" value="Eukaryota"/>
</dbReference>
<dbReference type="HOGENOM" id="CLU_011361_1_0_1"/>
<dbReference type="OMA" id="HSCLDFF"/>
<dbReference type="OrthoDB" id="272987at2759"/>
<dbReference type="Proteomes" id="UP000007963">
    <property type="component" value="Unassembled WGS sequence"/>
</dbReference>
<dbReference type="GO" id="GO:0000139">
    <property type="term" value="C:Golgi membrane"/>
    <property type="evidence" value="ECO:0007669"/>
    <property type="project" value="UniProtKB-SubCell"/>
</dbReference>
<dbReference type="GO" id="GO:0017119">
    <property type="term" value="C:Golgi transport complex"/>
    <property type="evidence" value="ECO:0007669"/>
    <property type="project" value="InterPro"/>
</dbReference>
<dbReference type="GO" id="GO:0006891">
    <property type="term" value="P:intra-Golgi vesicle-mediated transport"/>
    <property type="evidence" value="ECO:0007669"/>
    <property type="project" value="InterPro"/>
</dbReference>
<dbReference type="GO" id="GO:0015031">
    <property type="term" value="P:protein transport"/>
    <property type="evidence" value="ECO:0007669"/>
    <property type="project" value="UniProtKB-KW"/>
</dbReference>
<dbReference type="InterPro" id="IPR010490">
    <property type="entry name" value="COG6"/>
</dbReference>
<dbReference type="InterPro" id="IPR048369">
    <property type="entry name" value="COG6_C"/>
</dbReference>
<dbReference type="InterPro" id="IPR048368">
    <property type="entry name" value="COG6_N"/>
</dbReference>
<dbReference type="PANTHER" id="PTHR21506">
    <property type="entry name" value="COMPONENT OF OLIGOMERIC GOLGI COMPLEX 6"/>
    <property type="match status" value="1"/>
</dbReference>
<dbReference type="PANTHER" id="PTHR21506:SF0">
    <property type="entry name" value="CONSERVED OLIGOMERIC GOLGI COMPLEX SUBUNIT 6"/>
    <property type="match status" value="1"/>
</dbReference>
<dbReference type="Pfam" id="PF20653">
    <property type="entry name" value="COG6_C"/>
    <property type="match status" value="1"/>
</dbReference>
<dbReference type="Pfam" id="PF06419">
    <property type="entry name" value="COG6_N"/>
    <property type="match status" value="1"/>
</dbReference>
<dbReference type="SMART" id="SM01087">
    <property type="entry name" value="COG6"/>
    <property type="match status" value="1"/>
</dbReference>
<accession>Q0CSR3</accession>